<evidence type="ECO:0000255" key="1">
    <source>
        <dbReference type="HAMAP-Rule" id="MF_00833"/>
    </source>
</evidence>
<keyword id="KW-0285">Flavoprotein</keyword>
<keyword id="KW-0288">FMN</keyword>
<keyword id="KW-0520">NAD</keyword>
<keyword id="KW-0560">Oxidoreductase</keyword>
<keyword id="KW-1185">Reference proteome</keyword>
<proteinExistence type="inferred from homology"/>
<comment type="function">
    <text evidence="1">Catalyzes the reduction of FMN to FMNH2 which is used to reduce pyrimidine by RutA via the Rut pathway.</text>
</comment>
<comment type="catalytic activity">
    <reaction evidence="1">
        <text>FMNH2 + NAD(+) = FMN + NADH + 2 H(+)</text>
        <dbReference type="Rhea" id="RHEA:21620"/>
        <dbReference type="ChEBI" id="CHEBI:15378"/>
        <dbReference type="ChEBI" id="CHEBI:57540"/>
        <dbReference type="ChEBI" id="CHEBI:57618"/>
        <dbReference type="ChEBI" id="CHEBI:57945"/>
        <dbReference type="ChEBI" id="CHEBI:58210"/>
        <dbReference type="EC" id="1.5.1.42"/>
    </reaction>
</comment>
<comment type="induction">
    <text evidence="1">Up-regulated by the nitrogen regulatory protein C (NtrC also called GlnG) and repressed by RutR.</text>
</comment>
<comment type="similarity">
    <text evidence="1">Belongs to the non-flavoprotein flavin reductase family. RutF subfamily.</text>
</comment>
<feature type="chain" id="PRO_0000403011" description="FMN reductase (NADH) RutF">
    <location>
        <begin position="1"/>
        <end position="164"/>
    </location>
</feature>
<gene>
    <name evidence="1" type="primary">rutF</name>
    <name type="ordered locus">EcE24377A_1125</name>
</gene>
<dbReference type="EC" id="1.5.1.42" evidence="1"/>
<dbReference type="EMBL" id="CP000800">
    <property type="protein sequence ID" value="ABV20608.1"/>
    <property type="molecule type" value="Genomic_DNA"/>
</dbReference>
<dbReference type="RefSeq" id="WP_001028095.1">
    <property type="nucleotide sequence ID" value="NC_009801.1"/>
</dbReference>
<dbReference type="SMR" id="A7ZKB2"/>
<dbReference type="GeneID" id="75171083"/>
<dbReference type="KEGG" id="ecw:EcE24377A_1125"/>
<dbReference type="HOGENOM" id="CLU_059021_2_2_6"/>
<dbReference type="Proteomes" id="UP000001122">
    <property type="component" value="Chromosome"/>
</dbReference>
<dbReference type="GO" id="GO:0010181">
    <property type="term" value="F:FMN binding"/>
    <property type="evidence" value="ECO:0007669"/>
    <property type="project" value="InterPro"/>
</dbReference>
<dbReference type="GO" id="GO:0052874">
    <property type="term" value="F:FMN reductase (NADH) activity"/>
    <property type="evidence" value="ECO:0007669"/>
    <property type="project" value="UniProtKB-EC"/>
</dbReference>
<dbReference type="GO" id="GO:0008752">
    <property type="term" value="F:FMN reductase [NAD(P)H] activity"/>
    <property type="evidence" value="ECO:0007669"/>
    <property type="project" value="InterPro"/>
</dbReference>
<dbReference type="GO" id="GO:0042602">
    <property type="term" value="F:riboflavin reductase (NADPH) activity"/>
    <property type="evidence" value="ECO:0007669"/>
    <property type="project" value="UniProtKB-UniRule"/>
</dbReference>
<dbReference type="GO" id="GO:0019740">
    <property type="term" value="P:nitrogen utilization"/>
    <property type="evidence" value="ECO:0007669"/>
    <property type="project" value="UniProtKB-UniRule"/>
</dbReference>
<dbReference type="GO" id="GO:0006212">
    <property type="term" value="P:uracil catabolic process"/>
    <property type="evidence" value="ECO:0007669"/>
    <property type="project" value="UniProtKB-UniRule"/>
</dbReference>
<dbReference type="FunFam" id="2.30.110.10:FF:000002">
    <property type="entry name" value="FMN reductase (NADH) RutF"/>
    <property type="match status" value="1"/>
</dbReference>
<dbReference type="Gene3D" id="2.30.110.10">
    <property type="entry name" value="Electron Transport, Fmn-binding Protein, Chain A"/>
    <property type="match status" value="1"/>
</dbReference>
<dbReference type="HAMAP" id="MF_00833">
    <property type="entry name" value="RutF"/>
    <property type="match status" value="1"/>
</dbReference>
<dbReference type="InterPro" id="IPR002563">
    <property type="entry name" value="Flavin_Rdtase-like_dom"/>
</dbReference>
<dbReference type="InterPro" id="IPR050268">
    <property type="entry name" value="NADH-dep_flavin_reductase"/>
</dbReference>
<dbReference type="InterPro" id="IPR019917">
    <property type="entry name" value="RutF"/>
</dbReference>
<dbReference type="InterPro" id="IPR012349">
    <property type="entry name" value="Split_barrel_FMN-bd"/>
</dbReference>
<dbReference type="NCBIfam" id="TIGR03615">
    <property type="entry name" value="RutF"/>
    <property type="match status" value="1"/>
</dbReference>
<dbReference type="PANTHER" id="PTHR30466">
    <property type="entry name" value="FLAVIN REDUCTASE"/>
    <property type="match status" value="1"/>
</dbReference>
<dbReference type="PANTHER" id="PTHR30466:SF1">
    <property type="entry name" value="FMN REDUCTASE (NADH) RUTF"/>
    <property type="match status" value="1"/>
</dbReference>
<dbReference type="Pfam" id="PF01613">
    <property type="entry name" value="Flavin_Reduct"/>
    <property type="match status" value="1"/>
</dbReference>
<dbReference type="SMART" id="SM00903">
    <property type="entry name" value="Flavin_Reduct"/>
    <property type="match status" value="1"/>
</dbReference>
<dbReference type="SUPFAM" id="SSF50475">
    <property type="entry name" value="FMN-binding split barrel"/>
    <property type="match status" value="1"/>
</dbReference>
<organism>
    <name type="scientific">Escherichia coli O139:H28 (strain E24377A / ETEC)</name>
    <dbReference type="NCBI Taxonomy" id="331111"/>
    <lineage>
        <taxon>Bacteria</taxon>
        <taxon>Pseudomonadati</taxon>
        <taxon>Pseudomonadota</taxon>
        <taxon>Gammaproteobacteria</taxon>
        <taxon>Enterobacterales</taxon>
        <taxon>Enterobacteriaceae</taxon>
        <taxon>Escherichia</taxon>
    </lineage>
</organism>
<accession>A7ZKB2</accession>
<reference key="1">
    <citation type="journal article" date="2008" name="J. Bacteriol.">
        <title>The pangenome structure of Escherichia coli: comparative genomic analysis of E. coli commensal and pathogenic isolates.</title>
        <authorList>
            <person name="Rasko D.A."/>
            <person name="Rosovitz M.J."/>
            <person name="Myers G.S.A."/>
            <person name="Mongodin E.F."/>
            <person name="Fricke W.F."/>
            <person name="Gajer P."/>
            <person name="Crabtree J."/>
            <person name="Sebaihia M."/>
            <person name="Thomson N.R."/>
            <person name="Chaudhuri R."/>
            <person name="Henderson I.R."/>
            <person name="Sperandio V."/>
            <person name="Ravel J."/>
        </authorList>
    </citation>
    <scope>NUCLEOTIDE SEQUENCE [LARGE SCALE GENOMIC DNA]</scope>
    <source>
        <strain>E24377A / ETEC</strain>
    </source>
</reference>
<name>RUTF_ECO24</name>
<protein>
    <recommendedName>
        <fullName evidence="1">FMN reductase (NADH) RutF</fullName>
        <ecNumber evidence="1">1.5.1.42</ecNumber>
    </recommendedName>
    <alternativeName>
        <fullName evidence="1">FMN reductase</fullName>
    </alternativeName>
    <alternativeName>
        <fullName evidence="1">NADH-flavin reductase RutF</fullName>
    </alternativeName>
    <alternativeName>
        <fullName evidence="1">NADH:flavin oxidoreductase</fullName>
    </alternativeName>
</protein>
<sequence length="164" mass="17747">MNIVDQQTFRDAMSCMGAAVNIITTDGPAGRAGFTASAVCSVTDTPPTLLVCLNRGASVWPVFNENRTLCVNTLSAGQEPLSNLFGGKTPMEHRFAAARWQTGVTGCPQLEEALVSFDCRISQVVSVGTHDILFCAIEAIHRHATPYGLVWFDRSYHALMRPAC</sequence>